<proteinExistence type="inferred from homology"/>
<evidence type="ECO:0000255" key="1">
    <source>
        <dbReference type="HAMAP-Rule" id="MF_00091"/>
    </source>
</evidence>
<organism>
    <name type="scientific">Staphylococcus aureus (strain USA300)</name>
    <dbReference type="NCBI Taxonomy" id="367830"/>
    <lineage>
        <taxon>Bacteria</taxon>
        <taxon>Bacillati</taxon>
        <taxon>Bacillota</taxon>
        <taxon>Bacilli</taxon>
        <taxon>Bacillales</taxon>
        <taxon>Staphylococcaceae</taxon>
        <taxon>Staphylococcus</taxon>
    </lineage>
</organism>
<gene>
    <name evidence="1" type="primary">luxS</name>
    <name type="ordered locus">SAUSA300_2088</name>
</gene>
<comment type="function">
    <text evidence="1">Involved in the synthesis of autoinducer 2 (AI-2) which is secreted by bacteria and is used to communicate both the cell density and the metabolic potential of the environment. The regulation of gene expression in response to changes in cell density is called quorum sensing. Catalyzes the transformation of S-ribosylhomocysteine (RHC) to homocysteine (HC) and 4,5-dihydroxy-2,3-pentadione (DPD).</text>
</comment>
<comment type="catalytic activity">
    <reaction evidence="1">
        <text>S-(5-deoxy-D-ribos-5-yl)-L-homocysteine = (S)-4,5-dihydroxypentane-2,3-dione + L-homocysteine</text>
        <dbReference type="Rhea" id="RHEA:17753"/>
        <dbReference type="ChEBI" id="CHEBI:29484"/>
        <dbReference type="ChEBI" id="CHEBI:58195"/>
        <dbReference type="ChEBI" id="CHEBI:58199"/>
        <dbReference type="EC" id="4.4.1.21"/>
    </reaction>
</comment>
<comment type="cofactor">
    <cofactor evidence="1">
        <name>Fe cation</name>
        <dbReference type="ChEBI" id="CHEBI:24875"/>
    </cofactor>
    <text evidence="1">Binds 1 Fe cation per subunit.</text>
</comment>
<comment type="subunit">
    <text evidence="1">Homodimer.</text>
</comment>
<comment type="similarity">
    <text evidence="1">Belongs to the LuxS family.</text>
</comment>
<keyword id="KW-0071">Autoinducer synthesis</keyword>
<keyword id="KW-0408">Iron</keyword>
<keyword id="KW-0456">Lyase</keyword>
<keyword id="KW-0479">Metal-binding</keyword>
<keyword id="KW-0673">Quorum sensing</keyword>
<dbReference type="EC" id="4.4.1.21" evidence="1"/>
<dbReference type="EMBL" id="CP000255">
    <property type="protein sequence ID" value="ABD21815.1"/>
    <property type="molecule type" value="Genomic_DNA"/>
</dbReference>
<dbReference type="RefSeq" id="WP_000164421.1">
    <property type="nucleotide sequence ID" value="NZ_CP027476.1"/>
</dbReference>
<dbReference type="SMR" id="Q2FEZ4"/>
<dbReference type="KEGG" id="saa:SAUSA300_2088"/>
<dbReference type="HOGENOM" id="CLU_107531_2_0_9"/>
<dbReference type="OMA" id="DVSPMGC"/>
<dbReference type="Proteomes" id="UP000001939">
    <property type="component" value="Chromosome"/>
</dbReference>
<dbReference type="GO" id="GO:0005506">
    <property type="term" value="F:iron ion binding"/>
    <property type="evidence" value="ECO:0007669"/>
    <property type="project" value="InterPro"/>
</dbReference>
<dbReference type="GO" id="GO:0043768">
    <property type="term" value="F:S-ribosylhomocysteine lyase activity"/>
    <property type="evidence" value="ECO:0007669"/>
    <property type="project" value="UniProtKB-UniRule"/>
</dbReference>
<dbReference type="GO" id="GO:0009372">
    <property type="term" value="P:quorum sensing"/>
    <property type="evidence" value="ECO:0007669"/>
    <property type="project" value="UniProtKB-UniRule"/>
</dbReference>
<dbReference type="Gene3D" id="3.30.1360.80">
    <property type="entry name" value="S-ribosylhomocysteinase (LuxS)"/>
    <property type="match status" value="1"/>
</dbReference>
<dbReference type="HAMAP" id="MF_00091">
    <property type="entry name" value="LuxS"/>
    <property type="match status" value="1"/>
</dbReference>
<dbReference type="InterPro" id="IPR037005">
    <property type="entry name" value="LuxS_sf"/>
</dbReference>
<dbReference type="InterPro" id="IPR011249">
    <property type="entry name" value="Metalloenz_LuxS/M16"/>
</dbReference>
<dbReference type="InterPro" id="IPR003815">
    <property type="entry name" value="S-ribosylhomocysteinase"/>
</dbReference>
<dbReference type="NCBIfam" id="NF002604">
    <property type="entry name" value="PRK02260.1-4"/>
    <property type="match status" value="1"/>
</dbReference>
<dbReference type="PANTHER" id="PTHR35799">
    <property type="entry name" value="S-RIBOSYLHOMOCYSTEINE LYASE"/>
    <property type="match status" value="1"/>
</dbReference>
<dbReference type="PANTHER" id="PTHR35799:SF1">
    <property type="entry name" value="S-RIBOSYLHOMOCYSTEINE LYASE"/>
    <property type="match status" value="1"/>
</dbReference>
<dbReference type="Pfam" id="PF02664">
    <property type="entry name" value="LuxS"/>
    <property type="match status" value="1"/>
</dbReference>
<dbReference type="PIRSF" id="PIRSF006160">
    <property type="entry name" value="AI2"/>
    <property type="match status" value="1"/>
</dbReference>
<dbReference type="PRINTS" id="PR01487">
    <property type="entry name" value="LUXSPROTEIN"/>
</dbReference>
<dbReference type="SUPFAM" id="SSF63411">
    <property type="entry name" value="LuxS/MPP-like metallohydrolase"/>
    <property type="match status" value="1"/>
</dbReference>
<protein>
    <recommendedName>
        <fullName evidence="1">S-ribosylhomocysteine lyase</fullName>
        <ecNumber evidence="1">4.4.1.21</ecNumber>
    </recommendedName>
    <alternativeName>
        <fullName evidence="1">AI-2 synthesis protein</fullName>
    </alternativeName>
    <alternativeName>
        <fullName evidence="1">Autoinducer-2 production protein LuxS</fullName>
    </alternativeName>
</protein>
<name>LUXS_STAA3</name>
<feature type="chain" id="PRO_0000298037" description="S-ribosylhomocysteine lyase">
    <location>
        <begin position="1"/>
        <end position="156"/>
    </location>
</feature>
<feature type="binding site" evidence="1">
    <location>
        <position position="56"/>
    </location>
    <ligand>
        <name>Fe cation</name>
        <dbReference type="ChEBI" id="CHEBI:24875"/>
    </ligand>
</feature>
<feature type="binding site" evidence="1">
    <location>
        <position position="60"/>
    </location>
    <ligand>
        <name>Fe cation</name>
        <dbReference type="ChEBI" id="CHEBI:24875"/>
    </ligand>
</feature>
<feature type="binding site" evidence="1">
    <location>
        <position position="123"/>
    </location>
    <ligand>
        <name>Fe cation</name>
        <dbReference type="ChEBI" id="CHEBI:24875"/>
    </ligand>
</feature>
<accession>Q2FEZ4</accession>
<reference key="1">
    <citation type="journal article" date="2006" name="Lancet">
        <title>Complete genome sequence of USA300, an epidemic clone of community-acquired meticillin-resistant Staphylococcus aureus.</title>
        <authorList>
            <person name="Diep B.A."/>
            <person name="Gill S.R."/>
            <person name="Chang R.F."/>
            <person name="Phan T.H."/>
            <person name="Chen J.H."/>
            <person name="Davidson M.G."/>
            <person name="Lin F."/>
            <person name="Lin J."/>
            <person name="Carleton H.A."/>
            <person name="Mongodin E.F."/>
            <person name="Sensabaugh G.F."/>
            <person name="Perdreau-Remington F."/>
        </authorList>
    </citation>
    <scope>NUCLEOTIDE SEQUENCE [LARGE SCALE GENOMIC DNA]</scope>
    <source>
        <strain>USA300</strain>
    </source>
</reference>
<sequence length="156" mass="17514">MTKMNVESFNLDHTKVVAPFIRLAGTMEGLNGDVIHKYDIRFKQPNKEHMDMPGLHSLEHLMAENIRNHSDKVVDLSPMGCQTGFYVSFINHDNYDDVLNIVEATLNDVLNATEVPACNEVQCGWAASHSLEGAKTIAQAFLDKRNEWHDVFGTGK</sequence>